<organism>
    <name type="scientific">Streptococcus gordonii (strain Challis / ATCC 35105 / BCRC 15272 / CH1 / DL1 / V288)</name>
    <dbReference type="NCBI Taxonomy" id="467705"/>
    <lineage>
        <taxon>Bacteria</taxon>
        <taxon>Bacillati</taxon>
        <taxon>Bacillota</taxon>
        <taxon>Bacilli</taxon>
        <taxon>Lactobacillales</taxon>
        <taxon>Streptococcaceae</taxon>
        <taxon>Streptococcus</taxon>
    </lineage>
</organism>
<protein>
    <recommendedName>
        <fullName evidence="1">Small ribosomal subunit protein uS19</fullName>
    </recommendedName>
    <alternativeName>
        <fullName evidence="2">30S ribosomal protein S19</fullName>
    </alternativeName>
</protein>
<comment type="function">
    <text evidence="1">Protein S19 forms a complex with S13 that binds strongly to the 16S ribosomal RNA.</text>
</comment>
<comment type="similarity">
    <text evidence="1">Belongs to the universal ribosomal protein uS19 family.</text>
</comment>
<gene>
    <name evidence="1" type="primary">rpsS</name>
    <name type="ordered locus">SGO_1981</name>
</gene>
<evidence type="ECO:0000255" key="1">
    <source>
        <dbReference type="HAMAP-Rule" id="MF_00531"/>
    </source>
</evidence>
<evidence type="ECO:0000305" key="2"/>
<keyword id="KW-1185">Reference proteome</keyword>
<keyword id="KW-0687">Ribonucleoprotein</keyword>
<keyword id="KW-0689">Ribosomal protein</keyword>
<keyword id="KW-0694">RNA-binding</keyword>
<keyword id="KW-0699">rRNA-binding</keyword>
<name>RS19_STRGC</name>
<sequence>MGRSLKKGPFVDEHLMKKVEAQANDEKKKVIKTWSRRSTIFPSFIGYTIAVYDGRKHVPVYIQEDMVGHKLGEFAPTRTYKGHAADDKKTRRK</sequence>
<dbReference type="EMBL" id="CP000725">
    <property type="protein sequence ID" value="ABV09822.1"/>
    <property type="molecule type" value="Genomic_DNA"/>
</dbReference>
<dbReference type="RefSeq" id="WP_000533766.1">
    <property type="nucleotide sequence ID" value="NC_009785.1"/>
</dbReference>
<dbReference type="SMR" id="A8AZM1"/>
<dbReference type="STRING" id="467705.SGO_1981"/>
<dbReference type="GeneID" id="93920908"/>
<dbReference type="KEGG" id="sgo:SGO_1981"/>
<dbReference type="eggNOG" id="COG0185">
    <property type="taxonomic scope" value="Bacteria"/>
</dbReference>
<dbReference type="HOGENOM" id="CLU_144911_0_1_9"/>
<dbReference type="Proteomes" id="UP000001131">
    <property type="component" value="Chromosome"/>
</dbReference>
<dbReference type="GO" id="GO:0005737">
    <property type="term" value="C:cytoplasm"/>
    <property type="evidence" value="ECO:0007669"/>
    <property type="project" value="UniProtKB-ARBA"/>
</dbReference>
<dbReference type="GO" id="GO:0015935">
    <property type="term" value="C:small ribosomal subunit"/>
    <property type="evidence" value="ECO:0007669"/>
    <property type="project" value="InterPro"/>
</dbReference>
<dbReference type="GO" id="GO:0019843">
    <property type="term" value="F:rRNA binding"/>
    <property type="evidence" value="ECO:0007669"/>
    <property type="project" value="UniProtKB-UniRule"/>
</dbReference>
<dbReference type="GO" id="GO:0003735">
    <property type="term" value="F:structural constituent of ribosome"/>
    <property type="evidence" value="ECO:0007669"/>
    <property type="project" value="InterPro"/>
</dbReference>
<dbReference type="GO" id="GO:0000028">
    <property type="term" value="P:ribosomal small subunit assembly"/>
    <property type="evidence" value="ECO:0007669"/>
    <property type="project" value="TreeGrafter"/>
</dbReference>
<dbReference type="GO" id="GO:0006412">
    <property type="term" value="P:translation"/>
    <property type="evidence" value="ECO:0007669"/>
    <property type="project" value="UniProtKB-UniRule"/>
</dbReference>
<dbReference type="FunFam" id="3.30.860.10:FF:000001">
    <property type="entry name" value="30S ribosomal protein S19"/>
    <property type="match status" value="1"/>
</dbReference>
<dbReference type="Gene3D" id="3.30.860.10">
    <property type="entry name" value="30s Ribosomal Protein S19, Chain A"/>
    <property type="match status" value="1"/>
</dbReference>
<dbReference type="HAMAP" id="MF_00531">
    <property type="entry name" value="Ribosomal_uS19"/>
    <property type="match status" value="1"/>
</dbReference>
<dbReference type="InterPro" id="IPR002222">
    <property type="entry name" value="Ribosomal_uS19"/>
</dbReference>
<dbReference type="InterPro" id="IPR005732">
    <property type="entry name" value="Ribosomal_uS19_bac-type"/>
</dbReference>
<dbReference type="InterPro" id="IPR020934">
    <property type="entry name" value="Ribosomal_uS19_CS"/>
</dbReference>
<dbReference type="InterPro" id="IPR023575">
    <property type="entry name" value="Ribosomal_uS19_SF"/>
</dbReference>
<dbReference type="NCBIfam" id="TIGR01050">
    <property type="entry name" value="rpsS_bact"/>
    <property type="match status" value="1"/>
</dbReference>
<dbReference type="PANTHER" id="PTHR11880">
    <property type="entry name" value="RIBOSOMAL PROTEIN S19P FAMILY MEMBER"/>
    <property type="match status" value="1"/>
</dbReference>
<dbReference type="PANTHER" id="PTHR11880:SF8">
    <property type="entry name" value="SMALL RIBOSOMAL SUBUNIT PROTEIN US19M"/>
    <property type="match status" value="1"/>
</dbReference>
<dbReference type="Pfam" id="PF00203">
    <property type="entry name" value="Ribosomal_S19"/>
    <property type="match status" value="1"/>
</dbReference>
<dbReference type="PIRSF" id="PIRSF002144">
    <property type="entry name" value="Ribosomal_S19"/>
    <property type="match status" value="1"/>
</dbReference>
<dbReference type="PRINTS" id="PR00975">
    <property type="entry name" value="RIBOSOMALS19"/>
</dbReference>
<dbReference type="SUPFAM" id="SSF54570">
    <property type="entry name" value="Ribosomal protein S19"/>
    <property type="match status" value="1"/>
</dbReference>
<dbReference type="PROSITE" id="PS00323">
    <property type="entry name" value="RIBOSOMAL_S19"/>
    <property type="match status" value="1"/>
</dbReference>
<proteinExistence type="inferred from homology"/>
<accession>A8AZM1</accession>
<feature type="chain" id="PRO_1000081798" description="Small ribosomal subunit protein uS19">
    <location>
        <begin position="1"/>
        <end position="93"/>
    </location>
</feature>
<reference key="1">
    <citation type="journal article" date="2007" name="J. Bacteriol.">
        <title>Genome-wide transcriptional changes in Streptococcus gordonii in response to competence signaling peptide.</title>
        <authorList>
            <person name="Vickerman M.M."/>
            <person name="Iobst S."/>
            <person name="Jesionowski A.M."/>
            <person name="Gill S.R."/>
        </authorList>
    </citation>
    <scope>NUCLEOTIDE SEQUENCE [LARGE SCALE GENOMIC DNA]</scope>
    <source>
        <strain>Challis / ATCC 35105 / BCRC 15272 / CH1 / DL1 / V288</strain>
    </source>
</reference>